<dbReference type="EC" id="2.3.1.47" evidence="1"/>
<dbReference type="EMBL" id="CP000886">
    <property type="protein sequence ID" value="ABX68102.1"/>
    <property type="molecule type" value="Genomic_DNA"/>
</dbReference>
<dbReference type="RefSeq" id="WP_000118944.1">
    <property type="nucleotide sequence ID" value="NC_010102.1"/>
</dbReference>
<dbReference type="SMR" id="A9MTI7"/>
<dbReference type="KEGG" id="spq:SPAB_02724"/>
<dbReference type="PATRIC" id="fig|1016998.12.peg.2577"/>
<dbReference type="HOGENOM" id="CLU_015846_11_2_6"/>
<dbReference type="BioCyc" id="SENT1016998:SPAB_RS11065-MONOMER"/>
<dbReference type="UniPathway" id="UPA00078"/>
<dbReference type="Proteomes" id="UP000008556">
    <property type="component" value="Chromosome"/>
</dbReference>
<dbReference type="GO" id="GO:0008710">
    <property type="term" value="F:8-amino-7-oxononanoate synthase activity"/>
    <property type="evidence" value="ECO:0007669"/>
    <property type="project" value="UniProtKB-UniRule"/>
</dbReference>
<dbReference type="GO" id="GO:0030170">
    <property type="term" value="F:pyridoxal phosphate binding"/>
    <property type="evidence" value="ECO:0007669"/>
    <property type="project" value="UniProtKB-UniRule"/>
</dbReference>
<dbReference type="GO" id="GO:0009102">
    <property type="term" value="P:biotin biosynthetic process"/>
    <property type="evidence" value="ECO:0007669"/>
    <property type="project" value="UniProtKB-UniRule"/>
</dbReference>
<dbReference type="CDD" id="cd06454">
    <property type="entry name" value="KBL_like"/>
    <property type="match status" value="1"/>
</dbReference>
<dbReference type="FunFam" id="3.40.640.10:FF:000095">
    <property type="entry name" value="8-amino-7-oxononanoate synthase"/>
    <property type="match status" value="1"/>
</dbReference>
<dbReference type="Gene3D" id="3.90.1150.10">
    <property type="entry name" value="Aspartate Aminotransferase, domain 1"/>
    <property type="match status" value="1"/>
</dbReference>
<dbReference type="Gene3D" id="3.40.640.10">
    <property type="entry name" value="Type I PLP-dependent aspartate aminotransferase-like (Major domain)"/>
    <property type="match status" value="1"/>
</dbReference>
<dbReference type="HAMAP" id="MF_01693">
    <property type="entry name" value="BioF_aminotrans_2"/>
    <property type="match status" value="1"/>
</dbReference>
<dbReference type="InterPro" id="IPR001917">
    <property type="entry name" value="Aminotrans_II_pyridoxalP_BS"/>
</dbReference>
<dbReference type="InterPro" id="IPR004839">
    <property type="entry name" value="Aminotransferase_I/II_large"/>
</dbReference>
<dbReference type="InterPro" id="IPR050087">
    <property type="entry name" value="AON_synthase_class-II"/>
</dbReference>
<dbReference type="InterPro" id="IPR004723">
    <property type="entry name" value="AONS_Archaea/Proteobacteria"/>
</dbReference>
<dbReference type="InterPro" id="IPR022834">
    <property type="entry name" value="AONS_Proteobacteria"/>
</dbReference>
<dbReference type="InterPro" id="IPR015424">
    <property type="entry name" value="PyrdxlP-dep_Trfase"/>
</dbReference>
<dbReference type="InterPro" id="IPR015421">
    <property type="entry name" value="PyrdxlP-dep_Trfase_major"/>
</dbReference>
<dbReference type="InterPro" id="IPR015422">
    <property type="entry name" value="PyrdxlP-dep_Trfase_small"/>
</dbReference>
<dbReference type="NCBIfam" id="TIGR00858">
    <property type="entry name" value="bioF"/>
    <property type="match status" value="1"/>
</dbReference>
<dbReference type="PANTHER" id="PTHR13693:SF100">
    <property type="entry name" value="8-AMINO-7-OXONONANOATE SYNTHASE"/>
    <property type="match status" value="1"/>
</dbReference>
<dbReference type="PANTHER" id="PTHR13693">
    <property type="entry name" value="CLASS II AMINOTRANSFERASE/8-AMINO-7-OXONONANOATE SYNTHASE"/>
    <property type="match status" value="1"/>
</dbReference>
<dbReference type="Pfam" id="PF00155">
    <property type="entry name" value="Aminotran_1_2"/>
    <property type="match status" value="1"/>
</dbReference>
<dbReference type="SUPFAM" id="SSF53383">
    <property type="entry name" value="PLP-dependent transferases"/>
    <property type="match status" value="1"/>
</dbReference>
<dbReference type="PROSITE" id="PS00599">
    <property type="entry name" value="AA_TRANSFER_CLASS_2"/>
    <property type="match status" value="1"/>
</dbReference>
<accession>A9MTI7</accession>
<evidence type="ECO:0000255" key="1">
    <source>
        <dbReference type="HAMAP-Rule" id="MF_01693"/>
    </source>
</evidence>
<reference key="1">
    <citation type="submission" date="2007-11" db="EMBL/GenBank/DDBJ databases">
        <authorList>
            <consortium name="The Salmonella enterica serovar Paratyphi B Genome Sequencing Project"/>
            <person name="McClelland M."/>
            <person name="Sanderson E.K."/>
            <person name="Porwollik S."/>
            <person name="Spieth J."/>
            <person name="Clifton W.S."/>
            <person name="Fulton R."/>
            <person name="Cordes M."/>
            <person name="Wollam A."/>
            <person name="Shah N."/>
            <person name="Pepin K."/>
            <person name="Bhonagiri V."/>
            <person name="Nash W."/>
            <person name="Johnson M."/>
            <person name="Thiruvilangam P."/>
            <person name="Wilson R."/>
        </authorList>
    </citation>
    <scope>NUCLEOTIDE SEQUENCE [LARGE SCALE GENOMIC DNA]</scope>
    <source>
        <strain>ATCC BAA-1250 / SPB7</strain>
    </source>
</reference>
<feature type="chain" id="PRO_0000381101" description="8-amino-7-oxononanoate synthase">
    <location>
        <begin position="1"/>
        <end position="385"/>
    </location>
</feature>
<feature type="binding site" evidence="1">
    <location>
        <position position="21"/>
    </location>
    <ligand>
        <name>substrate</name>
    </ligand>
</feature>
<feature type="binding site" evidence="1">
    <location>
        <begin position="108"/>
        <end position="109"/>
    </location>
    <ligand>
        <name>pyridoxal 5'-phosphate</name>
        <dbReference type="ChEBI" id="CHEBI:597326"/>
    </ligand>
</feature>
<feature type="binding site" evidence="1">
    <location>
        <position position="133"/>
    </location>
    <ligand>
        <name>substrate</name>
    </ligand>
</feature>
<feature type="binding site" evidence="1">
    <location>
        <position position="179"/>
    </location>
    <ligand>
        <name>pyridoxal 5'-phosphate</name>
        <dbReference type="ChEBI" id="CHEBI:597326"/>
    </ligand>
</feature>
<feature type="binding site" evidence="1">
    <location>
        <position position="207"/>
    </location>
    <ligand>
        <name>pyridoxal 5'-phosphate</name>
        <dbReference type="ChEBI" id="CHEBI:597326"/>
    </ligand>
</feature>
<feature type="binding site" evidence="1">
    <location>
        <position position="233"/>
    </location>
    <ligand>
        <name>pyridoxal 5'-phosphate</name>
        <dbReference type="ChEBI" id="CHEBI:597326"/>
    </ligand>
</feature>
<feature type="binding site" evidence="1">
    <location>
        <position position="352"/>
    </location>
    <ligand>
        <name>substrate</name>
    </ligand>
</feature>
<feature type="modified residue" description="N6-(pyridoxal phosphate)lysine" evidence="1">
    <location>
        <position position="236"/>
    </location>
</feature>
<keyword id="KW-0093">Biotin biosynthesis</keyword>
<keyword id="KW-0663">Pyridoxal phosphate</keyword>
<keyword id="KW-0808">Transferase</keyword>
<comment type="function">
    <text evidence="1">Catalyzes the decarboxylative condensation of pimeloyl-[acyl-carrier protein] and L-alanine to produce 8-amino-7-oxononanoate (AON), [acyl-carrier protein], and carbon dioxide.</text>
</comment>
<comment type="catalytic activity">
    <reaction evidence="1">
        <text>6-carboxyhexanoyl-[ACP] + L-alanine + H(+) = (8S)-8-amino-7-oxononanoate + holo-[ACP] + CO2</text>
        <dbReference type="Rhea" id="RHEA:42288"/>
        <dbReference type="Rhea" id="RHEA-COMP:9685"/>
        <dbReference type="Rhea" id="RHEA-COMP:9955"/>
        <dbReference type="ChEBI" id="CHEBI:15378"/>
        <dbReference type="ChEBI" id="CHEBI:16526"/>
        <dbReference type="ChEBI" id="CHEBI:57972"/>
        <dbReference type="ChEBI" id="CHEBI:64479"/>
        <dbReference type="ChEBI" id="CHEBI:78846"/>
        <dbReference type="ChEBI" id="CHEBI:149468"/>
        <dbReference type="EC" id="2.3.1.47"/>
    </reaction>
</comment>
<comment type="cofactor">
    <cofactor evidence="1">
        <name>pyridoxal 5'-phosphate</name>
        <dbReference type="ChEBI" id="CHEBI:597326"/>
    </cofactor>
</comment>
<comment type="pathway">
    <text evidence="1">Cofactor biosynthesis; biotin biosynthesis.</text>
</comment>
<comment type="subunit">
    <text evidence="1">Homodimer.</text>
</comment>
<comment type="similarity">
    <text evidence="1">Belongs to the class-II pyridoxal-phosphate-dependent aminotransferase family. BioF subfamily.</text>
</comment>
<name>BIOF_SALPB</name>
<protein>
    <recommendedName>
        <fullName evidence="1">8-amino-7-oxononanoate synthase</fullName>
        <shortName evidence="1">AONS</shortName>
        <ecNumber evidence="1">2.3.1.47</ecNumber>
    </recommendedName>
    <alternativeName>
        <fullName evidence="1">7-keto-8-amino-pelargonic acid synthase</fullName>
        <shortName evidence="1">7-KAP synthase</shortName>
        <shortName evidence="1">KAPA synthase</shortName>
    </alternativeName>
    <alternativeName>
        <fullName evidence="1">8-amino-7-ketopelargonate synthase</fullName>
    </alternativeName>
</protein>
<sequence length="385" mass="41912">MSWQQRVDDALTARRATDTLRRRYVVSQGAGRWLVANGRQYLNFSSNDYLGLSQHPQIIRAWQQAATRFGVGSGGSGHISGYSVAHQALEEELAQWLGYPRALLFISGFAANQAVITALMKKNDRIVADRLSHASLLEAANLSPAQLRRFIHNDTQHLSRLLQSPSVGQQLVVTEGVYSMDGDSAPLAEIQHIARRHHAWLLVDDAHGIGVTGDEGRGTCWLRGVKPELLVVTFGKGFGVSGAAVLCSESVADYLLQFARHLVYSTSMPPAQAQALSASLAVIRSDEGGERREKLAALVQRFRAGVNASRFTLLNAHSAIQPLIVGDNSRALRLAEALRQQGCWATAIRPPTVPVGTARLRLTLTQAHEACDIDRLLEVLHGAGE</sequence>
<gene>
    <name evidence="1" type="primary">bioF</name>
    <name type="ordered locus">SPAB_02724</name>
</gene>
<organism>
    <name type="scientific">Salmonella paratyphi B (strain ATCC BAA-1250 / SPB7)</name>
    <dbReference type="NCBI Taxonomy" id="1016998"/>
    <lineage>
        <taxon>Bacteria</taxon>
        <taxon>Pseudomonadati</taxon>
        <taxon>Pseudomonadota</taxon>
        <taxon>Gammaproteobacteria</taxon>
        <taxon>Enterobacterales</taxon>
        <taxon>Enterobacteriaceae</taxon>
        <taxon>Salmonella</taxon>
    </lineage>
</organism>
<proteinExistence type="inferred from homology"/>